<sequence length="360" mass="39699">MIATLERREGVSLWERFCAWITSTENRLYIGWFGCLMFPTLLTATSCFIIAFIAAPPVDIDGIREPVAGSLLYGNNIISGAVIPSSNAIGMHFYPIWEAASVDEWLYNGGPYQLIVLHFLLGVASYMGREWELSYRLGMRPWIFVAFSAPVAAASAVFLVYPIGQGSFSDGMPLGISGTFNFMLVFQAEHNILMHPFHMAGVAGVFGGSLFSAMHGSLVTSSLIRETTENESTNYGYKFGQEEETYNIVAAHGYFGRLIFQYASFNNSRALHFFLALWPVLGIWLTAMGISTMAFNLNGFNFNQSVVDSQGRVINTWADIINRADLGMEVMHERNAHNFPLDLASGDVLPVAFTAPAVNA</sequence>
<protein>
    <recommendedName>
        <fullName evidence="1">Photosystem II protein D1</fullName>
        <shortName evidence="1">PSII D1 protein</shortName>
        <ecNumber evidence="1">1.10.3.9</ecNumber>
    </recommendedName>
    <alternativeName>
        <fullName evidence="1">Photosystem II Q(B) protein</fullName>
    </alternativeName>
</protein>
<gene>
    <name evidence="1" type="primary">psbA</name>
</gene>
<reference key="1">
    <citation type="journal article" date="2007" name="Mol. Genet. Genomics">
        <title>Chloroplast genomes of the diatoms Phaeodactylum tricornutum and Thalassiosira pseudonana: comparison with other plastid genomes of the red lineage.</title>
        <authorList>
            <person name="Oudot-Le Secq M.-P."/>
            <person name="Grimwood J."/>
            <person name="Shapiro H."/>
            <person name="Armbrust E.V."/>
            <person name="Bowler C."/>
            <person name="Green B.R."/>
        </authorList>
    </citation>
    <scope>NUCLEOTIDE SEQUENCE [LARGE SCALE GENOMIC DNA]</scope>
    <source>
        <strain>CCMP1335 / NEPCC58 / CCAP 1085/12</strain>
    </source>
</reference>
<dbReference type="EC" id="1.10.3.9" evidence="1"/>
<dbReference type="EMBL" id="EF067921">
    <property type="protein sequence ID" value="ABK20797.1"/>
    <property type="molecule type" value="Genomic_DNA"/>
</dbReference>
<dbReference type="EMBL" id="EF067921">
    <property type="protein sequence ID" value="ABK20843.1"/>
    <property type="molecule type" value="Genomic_DNA"/>
</dbReference>
<dbReference type="RefSeq" id="YP_874574.1">
    <property type="nucleotide sequence ID" value="NC_008589.1"/>
</dbReference>
<dbReference type="RefSeq" id="YP_874620.1">
    <property type="nucleotide sequence ID" value="NC_008589.1"/>
</dbReference>
<dbReference type="PDB" id="8IWH">
    <property type="method" value="EM"/>
    <property type="resolution" value="2.68 A"/>
    <property type="chains" value="A/a=11-343"/>
</dbReference>
<dbReference type="PDBsum" id="8IWH"/>
<dbReference type="EMDB" id="EMD-35766"/>
<dbReference type="SMR" id="A0T0W2"/>
<dbReference type="STRING" id="35128.A0T0W2"/>
<dbReference type="GeneID" id="4524822"/>
<dbReference type="GeneID" id="4524891"/>
<dbReference type="InParanoid" id="A0T0W2"/>
<dbReference type="GO" id="GO:0009535">
    <property type="term" value="C:chloroplast thylakoid membrane"/>
    <property type="evidence" value="ECO:0007669"/>
    <property type="project" value="UniProtKB-SubCell"/>
</dbReference>
<dbReference type="GO" id="GO:0009523">
    <property type="term" value="C:photosystem II"/>
    <property type="evidence" value="ECO:0000318"/>
    <property type="project" value="GO_Central"/>
</dbReference>
<dbReference type="GO" id="GO:0016168">
    <property type="term" value="F:chlorophyll binding"/>
    <property type="evidence" value="ECO:0007669"/>
    <property type="project" value="UniProtKB-UniRule"/>
</dbReference>
<dbReference type="GO" id="GO:0045156">
    <property type="term" value="F:electron transporter, transferring electrons within the cyclic electron transport pathway of photosynthesis activity"/>
    <property type="evidence" value="ECO:0007669"/>
    <property type="project" value="InterPro"/>
</dbReference>
<dbReference type="GO" id="GO:0005506">
    <property type="term" value="F:iron ion binding"/>
    <property type="evidence" value="ECO:0007669"/>
    <property type="project" value="UniProtKB-UniRule"/>
</dbReference>
<dbReference type="GO" id="GO:0016682">
    <property type="term" value="F:oxidoreductase activity, acting on diphenols and related substances as donors, oxygen as acceptor"/>
    <property type="evidence" value="ECO:0007669"/>
    <property type="project" value="UniProtKB-UniRule"/>
</dbReference>
<dbReference type="GO" id="GO:0009772">
    <property type="term" value="P:photosynthetic electron transport in photosystem II"/>
    <property type="evidence" value="ECO:0007669"/>
    <property type="project" value="InterPro"/>
</dbReference>
<dbReference type="GO" id="GO:0009635">
    <property type="term" value="P:response to herbicide"/>
    <property type="evidence" value="ECO:0007669"/>
    <property type="project" value="UniProtKB-KW"/>
</dbReference>
<dbReference type="CDD" id="cd09289">
    <property type="entry name" value="Photosystem-II_D1"/>
    <property type="match status" value="1"/>
</dbReference>
<dbReference type="FunFam" id="1.20.85.10:FF:000002">
    <property type="entry name" value="Photosystem II protein D1"/>
    <property type="match status" value="1"/>
</dbReference>
<dbReference type="Gene3D" id="1.20.85.10">
    <property type="entry name" value="Photosystem II protein D1-like"/>
    <property type="match status" value="1"/>
</dbReference>
<dbReference type="HAMAP" id="MF_01379">
    <property type="entry name" value="PSII_PsbA_D1"/>
    <property type="match status" value="1"/>
</dbReference>
<dbReference type="InterPro" id="IPR055266">
    <property type="entry name" value="D1/D2"/>
</dbReference>
<dbReference type="InterPro" id="IPR036854">
    <property type="entry name" value="Photo_II_D1/D2_sf"/>
</dbReference>
<dbReference type="InterPro" id="IPR000484">
    <property type="entry name" value="Photo_RC_L/M"/>
</dbReference>
<dbReference type="InterPro" id="IPR055265">
    <property type="entry name" value="Photo_RC_L/M_CS"/>
</dbReference>
<dbReference type="InterPro" id="IPR005867">
    <property type="entry name" value="PSII_D1"/>
</dbReference>
<dbReference type="NCBIfam" id="TIGR01151">
    <property type="entry name" value="psbA"/>
    <property type="match status" value="1"/>
</dbReference>
<dbReference type="PANTHER" id="PTHR33149:SF12">
    <property type="entry name" value="PHOTOSYSTEM II D2 PROTEIN"/>
    <property type="match status" value="1"/>
</dbReference>
<dbReference type="PANTHER" id="PTHR33149">
    <property type="entry name" value="PHOTOSYSTEM II PROTEIN D1"/>
    <property type="match status" value="1"/>
</dbReference>
<dbReference type="Pfam" id="PF00124">
    <property type="entry name" value="Photo_RC"/>
    <property type="match status" value="1"/>
</dbReference>
<dbReference type="PRINTS" id="PR00256">
    <property type="entry name" value="REACTNCENTRE"/>
</dbReference>
<dbReference type="SUPFAM" id="SSF81483">
    <property type="entry name" value="Bacterial photosystem II reaction centre, L and M subunits"/>
    <property type="match status" value="1"/>
</dbReference>
<dbReference type="PROSITE" id="PS00244">
    <property type="entry name" value="REACTION_CENTER"/>
    <property type="match status" value="1"/>
</dbReference>
<name>PSBA_THAPS</name>
<accession>A0T0W2</accession>
<geneLocation type="chloroplast"/>
<comment type="function">
    <text evidence="1">Photosystem II (PSII) is a light-driven water:plastoquinone oxidoreductase that uses light energy to abstract electrons from H(2)O, generating O(2) and a proton gradient subsequently used for ATP formation. It consists of a core antenna complex that captures photons, and an electron transfer chain that converts photonic excitation into a charge separation. The D1/D2 (PsbA/PsbD) reaction center heterodimer binds P680, the primary electron donor of PSII as well as several subsequent electron acceptors.</text>
</comment>
<comment type="catalytic activity">
    <reaction evidence="1">
        <text>2 a plastoquinone + 4 hnu + 2 H2O = 2 a plastoquinol + O2</text>
        <dbReference type="Rhea" id="RHEA:36359"/>
        <dbReference type="Rhea" id="RHEA-COMP:9561"/>
        <dbReference type="Rhea" id="RHEA-COMP:9562"/>
        <dbReference type="ChEBI" id="CHEBI:15377"/>
        <dbReference type="ChEBI" id="CHEBI:15379"/>
        <dbReference type="ChEBI" id="CHEBI:17757"/>
        <dbReference type="ChEBI" id="CHEBI:30212"/>
        <dbReference type="ChEBI" id="CHEBI:62192"/>
        <dbReference type="EC" id="1.10.3.9"/>
    </reaction>
</comment>
<comment type="cofactor">
    <text evidence="1">The D1/D2 heterodimer binds P680, chlorophylls that are the primary electron donor of PSII, and subsequent electron acceptors. It shares a non-heme iron and each subunit binds pheophytin, quinone, additional chlorophylls, carotenoids and lipids. D1 provides most of the ligands for the Mn4-Ca-O5 cluster of the oxygen-evolving complex (OEC). There is also a Cl(-1) ion associated with D1 and D2, which is required for oxygen evolution. The PSII complex binds additional chlorophylls, carotenoids and specific lipids.</text>
</comment>
<comment type="subunit">
    <text evidence="1">PSII is composed of 1 copy each of membrane proteins PsbA, PsbB, PsbC, PsbD, PsbE, PsbF, PsbH, PsbI, PsbJ, PsbK, PsbL, PsbM, PsbT, PsbX, PsbY, PsbZ, Psb30/Ycf12, at least 3 peripheral proteins of the oxygen-evolving complex and a large number of cofactors. It forms dimeric complexes.</text>
</comment>
<comment type="subcellular location">
    <subcellularLocation>
        <location evidence="1">Plastid</location>
        <location evidence="1">Chloroplast thylakoid membrane</location>
        <topology evidence="1">Multi-pass membrane protein</topology>
    </subcellularLocation>
</comment>
<comment type="PTM">
    <text evidence="1">Tyr-161 forms a radical intermediate that is referred to as redox-active TyrZ, YZ or Y-Z.</text>
</comment>
<comment type="PTM">
    <text evidence="1">C-terminally processed by CTPA; processing is essential to allow assembly of the oxygen-evolving complex and thus photosynthetic growth.</text>
</comment>
<comment type="miscellaneous">
    <text evidence="1">2 of the reaction center chlorophylls (ChlD1 and ChlD2) are entirely coordinated by water.</text>
</comment>
<comment type="miscellaneous">
    <text evidence="1">Herbicides such as atrazine, BNT, diuron or ioxynil bind in the Q(B) binding site and block subsequent electron transfer.</text>
</comment>
<comment type="similarity">
    <text evidence="1">Belongs to the reaction center PufL/M/PsbA/D family.</text>
</comment>
<keyword id="KW-0002">3D-structure</keyword>
<keyword id="KW-0106">Calcium</keyword>
<keyword id="KW-0148">Chlorophyll</keyword>
<keyword id="KW-0150">Chloroplast</keyword>
<keyword id="KW-0157">Chromophore</keyword>
<keyword id="KW-0249">Electron transport</keyword>
<keyword id="KW-0359">Herbicide resistance</keyword>
<keyword id="KW-0408">Iron</keyword>
<keyword id="KW-0460">Magnesium</keyword>
<keyword id="KW-0464">Manganese</keyword>
<keyword id="KW-0472">Membrane</keyword>
<keyword id="KW-0479">Metal-binding</keyword>
<keyword id="KW-0560">Oxidoreductase</keyword>
<keyword id="KW-0602">Photosynthesis</keyword>
<keyword id="KW-0604">Photosystem II</keyword>
<keyword id="KW-0934">Plastid</keyword>
<keyword id="KW-0793">Thylakoid</keyword>
<keyword id="KW-0812">Transmembrane</keyword>
<keyword id="KW-1133">Transmembrane helix</keyword>
<keyword id="KW-0813">Transport</keyword>
<proteinExistence type="evidence at protein level"/>
<organism>
    <name type="scientific">Thalassiosira pseudonana</name>
    <name type="common">Marine diatom</name>
    <name type="synonym">Cyclotella nana</name>
    <dbReference type="NCBI Taxonomy" id="35128"/>
    <lineage>
        <taxon>Eukaryota</taxon>
        <taxon>Sar</taxon>
        <taxon>Stramenopiles</taxon>
        <taxon>Ochrophyta</taxon>
        <taxon>Bacillariophyta</taxon>
        <taxon>Coscinodiscophyceae</taxon>
        <taxon>Thalassiosirophycidae</taxon>
        <taxon>Thalassiosirales</taxon>
        <taxon>Thalassiosiraceae</taxon>
        <taxon>Thalassiosira</taxon>
    </lineage>
</organism>
<feature type="chain" id="PRO_0000316521" description="Photosystem II protein D1" evidence="1">
    <location>
        <begin position="1"/>
        <end position="344"/>
    </location>
</feature>
<feature type="propeptide" id="PRO_0000316522" evidence="1">
    <location>
        <begin position="345"/>
        <end position="360"/>
    </location>
</feature>
<feature type="transmembrane region" description="Helical" evidence="1">
    <location>
        <begin position="29"/>
        <end position="46"/>
    </location>
</feature>
<feature type="transmembrane region" description="Helical" evidence="1">
    <location>
        <begin position="118"/>
        <end position="133"/>
    </location>
</feature>
<feature type="transmembrane region" description="Helical" evidence="1">
    <location>
        <begin position="142"/>
        <end position="156"/>
    </location>
</feature>
<feature type="transmembrane region" description="Helical" evidence="1">
    <location>
        <begin position="197"/>
        <end position="218"/>
    </location>
</feature>
<feature type="transmembrane region" description="Helical" evidence="1">
    <location>
        <begin position="274"/>
        <end position="288"/>
    </location>
</feature>
<feature type="binding site" description="axial binding residue" evidence="1">
    <location>
        <position position="118"/>
    </location>
    <ligand>
        <name>chlorophyll a</name>
        <dbReference type="ChEBI" id="CHEBI:58416"/>
        <label>ChlzD1</label>
    </ligand>
    <ligandPart>
        <name>Mg</name>
        <dbReference type="ChEBI" id="CHEBI:25107"/>
    </ligandPart>
</feature>
<feature type="binding site" evidence="1">
    <location>
        <position position="126"/>
    </location>
    <ligand>
        <name>pheophytin a</name>
        <dbReference type="ChEBI" id="CHEBI:136840"/>
        <label>D1</label>
    </ligand>
</feature>
<feature type="binding site" evidence="1">
    <location>
        <position position="170"/>
    </location>
    <ligand>
        <name>[CaMn4O5] cluster</name>
        <dbReference type="ChEBI" id="CHEBI:189552"/>
    </ligand>
</feature>
<feature type="binding site" evidence="1">
    <location>
        <position position="189"/>
    </location>
    <ligand>
        <name>[CaMn4O5] cluster</name>
        <dbReference type="ChEBI" id="CHEBI:189552"/>
    </ligand>
</feature>
<feature type="binding site" description="axial binding residue" evidence="1">
    <location>
        <position position="198"/>
    </location>
    <ligand>
        <name>chlorophyll a</name>
        <dbReference type="ChEBI" id="CHEBI:58416"/>
        <label>PD1</label>
    </ligand>
    <ligandPart>
        <name>Mg</name>
        <dbReference type="ChEBI" id="CHEBI:25107"/>
    </ligandPart>
</feature>
<feature type="binding site" evidence="1">
    <location>
        <position position="215"/>
    </location>
    <ligand>
        <name>a quinone</name>
        <dbReference type="ChEBI" id="CHEBI:132124"/>
        <label>B</label>
    </ligand>
</feature>
<feature type="binding site" evidence="1">
    <location>
        <position position="215"/>
    </location>
    <ligand>
        <name>Fe cation</name>
        <dbReference type="ChEBI" id="CHEBI:24875"/>
        <note>ligand shared with heterodimeric partner</note>
    </ligand>
</feature>
<feature type="binding site" evidence="1">
    <location>
        <begin position="264"/>
        <end position="265"/>
    </location>
    <ligand>
        <name>a quinone</name>
        <dbReference type="ChEBI" id="CHEBI:132124"/>
        <label>B</label>
    </ligand>
</feature>
<feature type="binding site" evidence="1">
    <location>
        <position position="272"/>
    </location>
    <ligand>
        <name>Fe cation</name>
        <dbReference type="ChEBI" id="CHEBI:24875"/>
        <note>ligand shared with heterodimeric partner</note>
    </ligand>
</feature>
<feature type="binding site" evidence="1">
    <location>
        <position position="332"/>
    </location>
    <ligand>
        <name>[CaMn4O5] cluster</name>
        <dbReference type="ChEBI" id="CHEBI:189552"/>
    </ligand>
</feature>
<feature type="binding site" evidence="1">
    <location>
        <position position="333"/>
    </location>
    <ligand>
        <name>[CaMn4O5] cluster</name>
        <dbReference type="ChEBI" id="CHEBI:189552"/>
    </ligand>
</feature>
<feature type="binding site" evidence="1">
    <location>
        <position position="342"/>
    </location>
    <ligand>
        <name>[CaMn4O5] cluster</name>
        <dbReference type="ChEBI" id="CHEBI:189552"/>
    </ligand>
</feature>
<feature type="binding site" evidence="1">
    <location>
        <position position="344"/>
    </location>
    <ligand>
        <name>[CaMn4O5] cluster</name>
        <dbReference type="ChEBI" id="CHEBI:189552"/>
    </ligand>
</feature>
<feature type="site" description="Tyrosine radical intermediate" evidence="1">
    <location>
        <position position="161"/>
    </location>
</feature>
<feature type="site" description="Stabilizes free radical intermediate" evidence="1">
    <location>
        <position position="190"/>
    </location>
</feature>
<feature type="site" description="Cleavage; by CTPA" evidence="1">
    <location>
        <begin position="344"/>
        <end position="345"/>
    </location>
</feature>
<feature type="helix" evidence="2">
    <location>
        <begin position="13"/>
        <end position="21"/>
    </location>
</feature>
<feature type="strand" evidence="2">
    <location>
        <begin position="26"/>
        <end position="28"/>
    </location>
</feature>
<feature type="turn" evidence="2">
    <location>
        <begin position="31"/>
        <end position="33"/>
    </location>
</feature>
<feature type="helix" evidence="2">
    <location>
        <begin position="34"/>
        <end position="54"/>
    </location>
</feature>
<feature type="strand" evidence="2">
    <location>
        <begin position="61"/>
        <end position="64"/>
    </location>
</feature>
<feature type="helix" evidence="2">
    <location>
        <begin position="71"/>
        <end position="73"/>
    </location>
</feature>
<feature type="turn" evidence="2">
    <location>
        <begin position="77"/>
        <end position="79"/>
    </location>
</feature>
<feature type="turn" evidence="2">
    <location>
        <begin position="87"/>
        <end position="91"/>
    </location>
</feature>
<feature type="helix" evidence="2">
    <location>
        <begin position="96"/>
        <end position="98"/>
    </location>
</feature>
<feature type="strand" evidence="2">
    <location>
        <begin position="99"/>
        <end position="101"/>
    </location>
</feature>
<feature type="helix" evidence="2">
    <location>
        <begin position="102"/>
        <end position="107"/>
    </location>
</feature>
<feature type="helix" evidence="2">
    <location>
        <begin position="111"/>
        <end position="137"/>
    </location>
</feature>
<feature type="helix" evidence="2">
    <location>
        <begin position="143"/>
        <end position="165"/>
    </location>
</feature>
<feature type="helix" evidence="2">
    <location>
        <begin position="168"/>
        <end position="170"/>
    </location>
</feature>
<feature type="helix" evidence="2">
    <location>
        <begin position="176"/>
        <end position="190"/>
    </location>
</feature>
<feature type="helix" evidence="2">
    <location>
        <begin position="196"/>
        <end position="221"/>
    </location>
</feature>
<feature type="strand" evidence="2">
    <location>
        <begin position="229"/>
        <end position="231"/>
    </location>
</feature>
<feature type="helix" evidence="2">
    <location>
        <begin position="233"/>
        <end position="236"/>
    </location>
</feature>
<feature type="helix" evidence="2">
    <location>
        <begin position="248"/>
        <end position="258"/>
    </location>
</feature>
<feature type="helix" evidence="2">
    <location>
        <begin position="268"/>
        <end position="293"/>
    </location>
</feature>
<feature type="strand" evidence="2">
    <location>
        <begin position="296"/>
        <end position="298"/>
    </location>
</feature>
<feature type="strand" evidence="2">
    <location>
        <begin position="309"/>
        <end position="311"/>
    </location>
</feature>
<feature type="strand" evidence="2">
    <location>
        <begin position="313"/>
        <end position="315"/>
    </location>
</feature>
<feature type="helix" evidence="2">
    <location>
        <begin position="317"/>
        <end position="329"/>
    </location>
</feature>
<feature type="turn" evidence="2">
    <location>
        <begin position="334"/>
        <end position="336"/>
    </location>
</feature>
<evidence type="ECO:0000255" key="1">
    <source>
        <dbReference type="HAMAP-Rule" id="MF_01379"/>
    </source>
</evidence>
<evidence type="ECO:0007829" key="2">
    <source>
        <dbReference type="PDB" id="8IWH"/>
    </source>
</evidence>